<evidence type="ECO:0000255" key="1">
    <source>
        <dbReference type="HAMAP-Rule" id="MF_00530"/>
    </source>
</evidence>
<feature type="chain" id="PRO_0000265857" description="ATP synthase epsilon chain">
    <location>
        <begin position="1"/>
        <end position="134"/>
    </location>
</feature>
<accession>Q318V3</accession>
<organism>
    <name type="scientific">Prochlorococcus marinus (strain MIT 9312)</name>
    <dbReference type="NCBI Taxonomy" id="74546"/>
    <lineage>
        <taxon>Bacteria</taxon>
        <taxon>Bacillati</taxon>
        <taxon>Cyanobacteriota</taxon>
        <taxon>Cyanophyceae</taxon>
        <taxon>Synechococcales</taxon>
        <taxon>Prochlorococcaceae</taxon>
        <taxon>Prochlorococcus</taxon>
    </lineage>
</organism>
<dbReference type="EMBL" id="CP000111">
    <property type="protein sequence ID" value="ABB50592.1"/>
    <property type="molecule type" value="Genomic_DNA"/>
</dbReference>
<dbReference type="RefSeq" id="WP_011377075.1">
    <property type="nucleotide sequence ID" value="NC_007577.1"/>
</dbReference>
<dbReference type="SMR" id="Q318V3"/>
<dbReference type="STRING" id="74546.PMT9312_1532"/>
<dbReference type="KEGG" id="pmi:PMT9312_1532"/>
<dbReference type="eggNOG" id="COG0355">
    <property type="taxonomic scope" value="Bacteria"/>
</dbReference>
<dbReference type="HOGENOM" id="CLU_084338_1_2_3"/>
<dbReference type="OrthoDB" id="9804110at2"/>
<dbReference type="Proteomes" id="UP000002715">
    <property type="component" value="Chromosome"/>
</dbReference>
<dbReference type="GO" id="GO:0031676">
    <property type="term" value="C:plasma membrane-derived thylakoid membrane"/>
    <property type="evidence" value="ECO:0007669"/>
    <property type="project" value="UniProtKB-SubCell"/>
</dbReference>
<dbReference type="GO" id="GO:0045259">
    <property type="term" value="C:proton-transporting ATP synthase complex"/>
    <property type="evidence" value="ECO:0007669"/>
    <property type="project" value="UniProtKB-KW"/>
</dbReference>
<dbReference type="GO" id="GO:0005524">
    <property type="term" value="F:ATP binding"/>
    <property type="evidence" value="ECO:0007669"/>
    <property type="project" value="UniProtKB-UniRule"/>
</dbReference>
<dbReference type="GO" id="GO:0046933">
    <property type="term" value="F:proton-transporting ATP synthase activity, rotational mechanism"/>
    <property type="evidence" value="ECO:0007669"/>
    <property type="project" value="UniProtKB-UniRule"/>
</dbReference>
<dbReference type="CDD" id="cd12152">
    <property type="entry name" value="F1-ATPase_delta"/>
    <property type="match status" value="1"/>
</dbReference>
<dbReference type="Gene3D" id="2.60.15.10">
    <property type="entry name" value="F0F1 ATP synthase delta/epsilon subunit, N-terminal"/>
    <property type="match status" value="1"/>
</dbReference>
<dbReference type="Gene3D" id="1.10.287.540">
    <property type="entry name" value="Helix hairpin bin"/>
    <property type="match status" value="1"/>
</dbReference>
<dbReference type="HAMAP" id="MF_00530">
    <property type="entry name" value="ATP_synth_epsil_bac"/>
    <property type="match status" value="1"/>
</dbReference>
<dbReference type="InterPro" id="IPR001469">
    <property type="entry name" value="ATP_synth_F1_dsu/esu"/>
</dbReference>
<dbReference type="InterPro" id="IPR020546">
    <property type="entry name" value="ATP_synth_F1_dsu/esu_N"/>
</dbReference>
<dbReference type="InterPro" id="IPR036771">
    <property type="entry name" value="ATPsynth_dsu/esu_N"/>
</dbReference>
<dbReference type="NCBIfam" id="TIGR01216">
    <property type="entry name" value="ATP_synt_epsi"/>
    <property type="match status" value="1"/>
</dbReference>
<dbReference type="PANTHER" id="PTHR13822">
    <property type="entry name" value="ATP SYNTHASE DELTA/EPSILON CHAIN"/>
    <property type="match status" value="1"/>
</dbReference>
<dbReference type="PANTHER" id="PTHR13822:SF10">
    <property type="entry name" value="ATP SYNTHASE EPSILON CHAIN, CHLOROPLASTIC"/>
    <property type="match status" value="1"/>
</dbReference>
<dbReference type="Pfam" id="PF02823">
    <property type="entry name" value="ATP-synt_DE_N"/>
    <property type="match status" value="1"/>
</dbReference>
<dbReference type="SUPFAM" id="SSF51344">
    <property type="entry name" value="Epsilon subunit of F1F0-ATP synthase N-terminal domain"/>
    <property type="match status" value="1"/>
</dbReference>
<proteinExistence type="inferred from homology"/>
<name>ATPE_PROM9</name>
<sequence length="134" mass="14596">MPISLKVLAPNKNVYQGEAEEVILPSTTGQLGVLPGHISLVTAIDIGVLRLRMNSQWQSIALMGGFAEIESDEVIVLVNNAEIGSDIDVQNAEQDLKEAKLVMTKFPENEKNSEKIKALQEISKAEARIQAAKN</sequence>
<comment type="function">
    <text evidence="1">Produces ATP from ADP in the presence of a proton gradient across the membrane.</text>
</comment>
<comment type="subunit">
    <text>F-type ATPases have 2 components, CF(1) - the catalytic core - and CF(0) - the membrane proton channel. CF(1) has five subunits: alpha(3), beta(3), gamma(1), delta(1), epsilon(1). CF(0) has three main subunits: a, b and c.</text>
</comment>
<comment type="subcellular location">
    <subcellularLocation>
        <location evidence="1">Cellular thylakoid membrane</location>
        <topology evidence="1">Peripheral membrane protein</topology>
    </subcellularLocation>
</comment>
<comment type="similarity">
    <text evidence="1">Belongs to the ATPase epsilon chain family.</text>
</comment>
<keyword id="KW-0066">ATP synthesis</keyword>
<keyword id="KW-0139">CF(1)</keyword>
<keyword id="KW-0375">Hydrogen ion transport</keyword>
<keyword id="KW-0406">Ion transport</keyword>
<keyword id="KW-0472">Membrane</keyword>
<keyword id="KW-0793">Thylakoid</keyword>
<keyword id="KW-0813">Transport</keyword>
<gene>
    <name evidence="1" type="primary">atpC</name>
    <name type="ordered locus">PMT9312_1532</name>
</gene>
<protein>
    <recommendedName>
        <fullName evidence="1">ATP synthase epsilon chain</fullName>
    </recommendedName>
    <alternativeName>
        <fullName evidence="1">ATP synthase F1 sector epsilon subunit</fullName>
    </alternativeName>
    <alternativeName>
        <fullName evidence="1">F-ATPase epsilon subunit</fullName>
    </alternativeName>
</protein>
<reference key="1">
    <citation type="journal article" date="2006" name="Science">
        <title>Genomic islands and the ecology and evolution of Prochlorococcus.</title>
        <authorList>
            <person name="Coleman M.L."/>
            <person name="Sullivan M.B."/>
            <person name="Martiny A.C."/>
            <person name="Steglich C."/>
            <person name="Barry K."/>
            <person name="Delong E.F."/>
            <person name="Chisholm S.W."/>
        </authorList>
    </citation>
    <scope>NUCLEOTIDE SEQUENCE [LARGE SCALE GENOMIC DNA]</scope>
    <source>
        <strain>MIT 9312</strain>
    </source>
</reference>